<comment type="function">
    <text evidence="1">Catalyzes the reduction of hydroxylamine to form NH(3) and H(2)O.</text>
</comment>
<comment type="catalytic activity">
    <reaction evidence="1">
        <text>A + NH4(+) + H2O = hydroxylamine + AH2 + H(+)</text>
        <dbReference type="Rhea" id="RHEA:22052"/>
        <dbReference type="ChEBI" id="CHEBI:13193"/>
        <dbReference type="ChEBI" id="CHEBI:15377"/>
        <dbReference type="ChEBI" id="CHEBI:15378"/>
        <dbReference type="ChEBI" id="CHEBI:15429"/>
        <dbReference type="ChEBI" id="CHEBI:17499"/>
        <dbReference type="ChEBI" id="CHEBI:28938"/>
        <dbReference type="EC" id="1.7.99.1"/>
    </reaction>
</comment>
<comment type="cofactor">
    <cofactor evidence="1">
        <name>[4Fe-4S] cluster</name>
        <dbReference type="ChEBI" id="CHEBI:49883"/>
    </cofactor>
    <text evidence="1">Binds 1 [4Fe-4S] cluster.</text>
</comment>
<comment type="cofactor">
    <cofactor evidence="1">
        <name>hybrid [4Fe-2O-2S] cluster</name>
        <dbReference type="ChEBI" id="CHEBI:60519"/>
    </cofactor>
    <text evidence="1">Binds 1 hybrid [4Fe-2O-2S] cluster.</text>
</comment>
<comment type="subcellular location">
    <subcellularLocation>
        <location evidence="1">Cytoplasm</location>
    </subcellularLocation>
</comment>
<comment type="similarity">
    <text evidence="1">Belongs to the HCP family.</text>
</comment>
<evidence type="ECO:0000255" key="1">
    <source>
        <dbReference type="HAMAP-Rule" id="MF_00069"/>
    </source>
</evidence>
<dbReference type="EC" id="1.7.99.1" evidence="1"/>
<dbReference type="EMBL" id="AE015928">
    <property type="protein sequence ID" value="AAO75794.1"/>
    <property type="molecule type" value="Genomic_DNA"/>
</dbReference>
<dbReference type="RefSeq" id="NP_809600.2">
    <property type="nucleotide sequence ID" value="NC_004663.1"/>
</dbReference>
<dbReference type="RefSeq" id="WP_008761363.1">
    <property type="nucleotide sequence ID" value="NC_004663.1"/>
</dbReference>
<dbReference type="SMR" id="Q8A9X8"/>
<dbReference type="FunCoup" id="Q8A9X8">
    <property type="interactions" value="59"/>
</dbReference>
<dbReference type="STRING" id="226186.BT_0687"/>
<dbReference type="PaxDb" id="226186-BT_0687"/>
<dbReference type="EnsemblBacteria" id="AAO75794">
    <property type="protein sequence ID" value="AAO75794"/>
    <property type="gene ID" value="BT_0687"/>
</dbReference>
<dbReference type="GeneID" id="60926655"/>
<dbReference type="KEGG" id="bth:BT_0687"/>
<dbReference type="PATRIC" id="fig|226186.12.peg.702"/>
<dbReference type="eggNOG" id="COG1151">
    <property type="taxonomic scope" value="Bacteria"/>
</dbReference>
<dbReference type="HOGENOM" id="CLU_038344_2_0_10"/>
<dbReference type="InParanoid" id="Q8A9X8"/>
<dbReference type="OrthoDB" id="9761526at2"/>
<dbReference type="Proteomes" id="UP000001414">
    <property type="component" value="Chromosome"/>
</dbReference>
<dbReference type="GO" id="GO:0005737">
    <property type="term" value="C:cytoplasm"/>
    <property type="evidence" value="ECO:0007669"/>
    <property type="project" value="UniProtKB-SubCell"/>
</dbReference>
<dbReference type="GO" id="GO:0051539">
    <property type="term" value="F:4 iron, 4 sulfur cluster binding"/>
    <property type="evidence" value="ECO:0007669"/>
    <property type="project" value="UniProtKB-KW"/>
</dbReference>
<dbReference type="GO" id="GO:0050418">
    <property type="term" value="F:hydroxylamine reductase activity"/>
    <property type="evidence" value="ECO:0000318"/>
    <property type="project" value="GO_Central"/>
</dbReference>
<dbReference type="GO" id="GO:0046872">
    <property type="term" value="F:metal ion binding"/>
    <property type="evidence" value="ECO:0007669"/>
    <property type="project" value="UniProtKB-KW"/>
</dbReference>
<dbReference type="GO" id="GO:0004601">
    <property type="term" value="F:peroxidase activity"/>
    <property type="evidence" value="ECO:0000318"/>
    <property type="project" value="GO_Central"/>
</dbReference>
<dbReference type="GO" id="GO:0046210">
    <property type="term" value="P:nitric oxide catabolic process"/>
    <property type="evidence" value="ECO:0000318"/>
    <property type="project" value="GO_Central"/>
</dbReference>
<dbReference type="GO" id="GO:0042542">
    <property type="term" value="P:response to hydrogen peroxide"/>
    <property type="evidence" value="ECO:0000318"/>
    <property type="project" value="GO_Central"/>
</dbReference>
<dbReference type="CDD" id="cd01914">
    <property type="entry name" value="HCP"/>
    <property type="match status" value="1"/>
</dbReference>
<dbReference type="FunFam" id="1.20.1270.20:FF:000001">
    <property type="entry name" value="Hydroxylamine reductase"/>
    <property type="match status" value="1"/>
</dbReference>
<dbReference type="FunFam" id="3.40.50.2030:FF:000001">
    <property type="entry name" value="Hydroxylamine reductase"/>
    <property type="match status" value="1"/>
</dbReference>
<dbReference type="FunFam" id="3.40.50.2030:FF:000002">
    <property type="entry name" value="Hydroxylamine reductase"/>
    <property type="match status" value="1"/>
</dbReference>
<dbReference type="Gene3D" id="1.20.1270.20">
    <property type="match status" value="2"/>
</dbReference>
<dbReference type="Gene3D" id="3.40.50.2030">
    <property type="match status" value="2"/>
</dbReference>
<dbReference type="HAMAP" id="MF_00069">
    <property type="entry name" value="Hydroxylam_reduct"/>
    <property type="match status" value="1"/>
</dbReference>
<dbReference type="InterPro" id="IPR004137">
    <property type="entry name" value="HCP/CODH"/>
</dbReference>
<dbReference type="InterPro" id="IPR010048">
    <property type="entry name" value="Hydroxylam_reduct"/>
</dbReference>
<dbReference type="InterPro" id="IPR016099">
    <property type="entry name" value="Prismane-like_a/b-sand"/>
</dbReference>
<dbReference type="InterPro" id="IPR011254">
    <property type="entry name" value="Prismane-like_sf"/>
</dbReference>
<dbReference type="InterPro" id="IPR016100">
    <property type="entry name" value="Prismane_a-bundle"/>
</dbReference>
<dbReference type="NCBIfam" id="TIGR01703">
    <property type="entry name" value="hybrid_clust"/>
    <property type="match status" value="1"/>
</dbReference>
<dbReference type="NCBIfam" id="NF003658">
    <property type="entry name" value="PRK05290.1"/>
    <property type="match status" value="1"/>
</dbReference>
<dbReference type="PANTHER" id="PTHR30109">
    <property type="entry name" value="HYDROXYLAMINE REDUCTASE"/>
    <property type="match status" value="1"/>
</dbReference>
<dbReference type="PANTHER" id="PTHR30109:SF0">
    <property type="entry name" value="HYDROXYLAMINE REDUCTASE"/>
    <property type="match status" value="1"/>
</dbReference>
<dbReference type="Pfam" id="PF03063">
    <property type="entry name" value="Prismane"/>
    <property type="match status" value="1"/>
</dbReference>
<dbReference type="PIRSF" id="PIRSF000076">
    <property type="entry name" value="HCP"/>
    <property type="match status" value="1"/>
</dbReference>
<dbReference type="SUPFAM" id="SSF56821">
    <property type="entry name" value="Prismane protein-like"/>
    <property type="match status" value="1"/>
</dbReference>
<keyword id="KW-0004">4Fe-4S</keyword>
<keyword id="KW-0963">Cytoplasm</keyword>
<keyword id="KW-0408">Iron</keyword>
<keyword id="KW-0411">Iron-sulfur</keyword>
<keyword id="KW-0479">Metal-binding</keyword>
<keyword id="KW-0560">Oxidoreductase</keyword>
<keyword id="KW-1185">Reference proteome</keyword>
<reference key="1">
    <citation type="journal article" date="2003" name="Science">
        <title>A genomic view of the human-Bacteroides thetaiotaomicron symbiosis.</title>
        <authorList>
            <person name="Xu J."/>
            <person name="Bjursell M.K."/>
            <person name="Himrod J."/>
            <person name="Deng S."/>
            <person name="Carmichael L.K."/>
            <person name="Chiang H.C."/>
            <person name="Hooper L.V."/>
            <person name="Gordon J.I."/>
        </authorList>
    </citation>
    <scope>NUCLEOTIDE SEQUENCE [LARGE SCALE GENOMIC DNA]</scope>
    <source>
        <strain>ATCC 29148 / DSM 2079 / JCM 5827 / CCUG 10774 / NCTC 10582 / VPI-5482 / E50</strain>
    </source>
</reference>
<protein>
    <recommendedName>
        <fullName evidence="1">Hydroxylamine reductase</fullName>
        <ecNumber evidence="1">1.7.99.1</ecNumber>
    </recommendedName>
    <alternativeName>
        <fullName evidence="1">Hybrid-cluster protein</fullName>
        <shortName evidence="1">HCP</shortName>
    </alternativeName>
    <alternativeName>
        <fullName evidence="1">Prismane protein</fullName>
    </alternativeName>
</protein>
<sequence length="543" mass="59840">MSMFCYQCQETAMGTGCTLKGVCGKTSEVANLQDLLLFVVRGIAVYNEHLRREGHPSEEADKFIYDALFITITNANFDKAAIIRKIKEGLQLKNELASKVTIANAPDECLWDGNEDEFEEKARTVGVLRTPDEDIRSLKELVHYGLKGMAAYVEHAHNLGYQSPEIFAFMQSALAELTRNDITMEELVQLTLATGKHGVSAMAQLDAANTNSYGNPEISEVNLGVRNNPGILISGHDLKDLEELLEQTEGTGIDIYTHSEMLPAHYYPQLKKYKHLAGNYGNAWWKQKEEFESFNGPILFTSNCIVPPRANASYKDRIYITGACGLEGAHYIPERKDGKPKDFSALIAHAKQCQPPTAIESGTLIGGFAHAQVVALADKVVEAVKSGAIRKFFVMAGCDGRMKSREYYTEFAEKLPKDTVILTAGCAKYRYNKLALGDINGIPRVLDAGQCNDSYSLAVIALKLKEVFGLDDVNKLPIVYNIAWYEQKAVIVLLALLALGVKNIHLGPTLPAFLSPNVKNVLIEQFGIGGISTADEDIMKFLS</sequence>
<accession>Q8A9X8</accession>
<organism>
    <name type="scientific">Bacteroides thetaiotaomicron (strain ATCC 29148 / DSM 2079 / JCM 5827 / CCUG 10774 / NCTC 10582 / VPI-5482 / E50)</name>
    <dbReference type="NCBI Taxonomy" id="226186"/>
    <lineage>
        <taxon>Bacteria</taxon>
        <taxon>Pseudomonadati</taxon>
        <taxon>Bacteroidota</taxon>
        <taxon>Bacteroidia</taxon>
        <taxon>Bacteroidales</taxon>
        <taxon>Bacteroidaceae</taxon>
        <taxon>Bacteroides</taxon>
    </lineage>
</organism>
<proteinExistence type="inferred from homology"/>
<feature type="chain" id="PRO_0000151668" description="Hydroxylamine reductase">
    <location>
        <begin position="1"/>
        <end position="543"/>
    </location>
</feature>
<feature type="binding site" evidence="1">
    <location>
        <position position="5"/>
    </location>
    <ligand>
        <name>[4Fe-4S] cluster</name>
        <dbReference type="ChEBI" id="CHEBI:49883"/>
    </ligand>
</feature>
<feature type="binding site" evidence="1">
    <location>
        <position position="8"/>
    </location>
    <ligand>
        <name>[4Fe-4S] cluster</name>
        <dbReference type="ChEBI" id="CHEBI:49883"/>
    </ligand>
</feature>
<feature type="binding site" evidence="1">
    <location>
        <position position="17"/>
    </location>
    <ligand>
        <name>[4Fe-4S] cluster</name>
        <dbReference type="ChEBI" id="CHEBI:49883"/>
    </ligand>
</feature>
<feature type="binding site" evidence="1">
    <location>
        <position position="23"/>
    </location>
    <ligand>
        <name>[4Fe-4S] cluster</name>
        <dbReference type="ChEBI" id="CHEBI:49883"/>
    </ligand>
</feature>
<feature type="binding site" evidence="1">
    <location>
        <position position="236"/>
    </location>
    <ligand>
        <name>hybrid [4Fe-2O-2S] cluster</name>
        <dbReference type="ChEBI" id="CHEBI:60519"/>
    </ligand>
</feature>
<feature type="binding site" evidence="1">
    <location>
        <position position="260"/>
    </location>
    <ligand>
        <name>hybrid [4Fe-2O-2S] cluster</name>
        <dbReference type="ChEBI" id="CHEBI:60519"/>
    </ligand>
</feature>
<feature type="binding site" evidence="1">
    <location>
        <position position="304"/>
    </location>
    <ligand>
        <name>hybrid [4Fe-2O-2S] cluster</name>
        <dbReference type="ChEBI" id="CHEBI:60519"/>
    </ligand>
</feature>
<feature type="binding site" description="via persulfide group" evidence="1">
    <location>
        <position position="398"/>
    </location>
    <ligand>
        <name>hybrid [4Fe-2O-2S] cluster</name>
        <dbReference type="ChEBI" id="CHEBI:60519"/>
    </ligand>
</feature>
<feature type="binding site" evidence="1">
    <location>
        <position position="426"/>
    </location>
    <ligand>
        <name>hybrid [4Fe-2O-2S] cluster</name>
        <dbReference type="ChEBI" id="CHEBI:60519"/>
    </ligand>
</feature>
<feature type="binding site" evidence="1">
    <location>
        <position position="451"/>
    </location>
    <ligand>
        <name>hybrid [4Fe-2O-2S] cluster</name>
        <dbReference type="ChEBI" id="CHEBI:60519"/>
    </ligand>
</feature>
<feature type="binding site" evidence="1">
    <location>
        <position position="486"/>
    </location>
    <ligand>
        <name>hybrid [4Fe-2O-2S] cluster</name>
        <dbReference type="ChEBI" id="CHEBI:60519"/>
    </ligand>
</feature>
<feature type="binding site" evidence="1">
    <location>
        <position position="488"/>
    </location>
    <ligand>
        <name>hybrid [4Fe-2O-2S] cluster</name>
        <dbReference type="ChEBI" id="CHEBI:60519"/>
    </ligand>
</feature>
<feature type="modified residue" description="Cysteine persulfide" evidence="1">
    <location>
        <position position="398"/>
    </location>
</feature>
<name>HCP_BACTN</name>
<gene>
    <name evidence="1" type="primary">hcp</name>
    <name type="ordered locus">BT_0687</name>
</gene>